<reference key="1">
    <citation type="journal article" date="2003" name="Genome Res.">
        <title>Genome sequence of an M3 strain of Streptococcus pyogenes reveals a large-scale genomic rearrangement in invasive strains and new insights into phage evolution.</title>
        <authorList>
            <person name="Nakagawa I."/>
            <person name="Kurokawa K."/>
            <person name="Yamashita A."/>
            <person name="Nakata M."/>
            <person name="Tomiyasu Y."/>
            <person name="Okahashi N."/>
            <person name="Kawabata S."/>
            <person name="Yamazaki K."/>
            <person name="Shiba T."/>
            <person name="Yasunaga T."/>
            <person name="Hayashi H."/>
            <person name="Hattori M."/>
            <person name="Hamada S."/>
        </authorList>
    </citation>
    <scope>NUCLEOTIDE SEQUENCE [LARGE SCALE GENOMIC DNA]</scope>
    <source>
        <strain>SSI-1</strain>
    </source>
</reference>
<feature type="chain" id="PRO_0000411552" description="Ribonuclease P protein component">
    <location>
        <begin position="1"/>
        <end position="119"/>
    </location>
</feature>
<organism>
    <name type="scientific">Streptococcus pyogenes serotype M3 (strain SSI-1)</name>
    <dbReference type="NCBI Taxonomy" id="193567"/>
    <lineage>
        <taxon>Bacteria</taxon>
        <taxon>Bacillati</taxon>
        <taxon>Bacillota</taxon>
        <taxon>Bacilli</taxon>
        <taxon>Lactobacillales</taxon>
        <taxon>Streptococcaceae</taxon>
        <taxon>Streptococcus</taxon>
    </lineage>
</organism>
<dbReference type="EC" id="3.1.26.5" evidence="1"/>
<dbReference type="EMBL" id="BA000034">
    <property type="protein sequence ID" value="BAC63275.1"/>
    <property type="molecule type" value="Genomic_DNA"/>
</dbReference>
<dbReference type="RefSeq" id="WP_002992035.1">
    <property type="nucleotide sequence ID" value="NC_004606.1"/>
</dbReference>
<dbReference type="SMR" id="P0DF25"/>
<dbReference type="GeneID" id="69900175"/>
<dbReference type="KEGG" id="sps:SPs0180"/>
<dbReference type="HOGENOM" id="CLU_117179_9_1_9"/>
<dbReference type="GO" id="GO:0030677">
    <property type="term" value="C:ribonuclease P complex"/>
    <property type="evidence" value="ECO:0007669"/>
    <property type="project" value="TreeGrafter"/>
</dbReference>
<dbReference type="GO" id="GO:0042781">
    <property type="term" value="F:3'-tRNA processing endoribonuclease activity"/>
    <property type="evidence" value="ECO:0007669"/>
    <property type="project" value="TreeGrafter"/>
</dbReference>
<dbReference type="GO" id="GO:0004526">
    <property type="term" value="F:ribonuclease P activity"/>
    <property type="evidence" value="ECO:0007669"/>
    <property type="project" value="UniProtKB-UniRule"/>
</dbReference>
<dbReference type="GO" id="GO:0000049">
    <property type="term" value="F:tRNA binding"/>
    <property type="evidence" value="ECO:0007669"/>
    <property type="project" value="UniProtKB-UniRule"/>
</dbReference>
<dbReference type="GO" id="GO:0001682">
    <property type="term" value="P:tRNA 5'-leader removal"/>
    <property type="evidence" value="ECO:0007669"/>
    <property type="project" value="UniProtKB-UniRule"/>
</dbReference>
<dbReference type="FunFam" id="3.30.230.10:FF:000021">
    <property type="entry name" value="Ribonuclease P protein component"/>
    <property type="match status" value="1"/>
</dbReference>
<dbReference type="Gene3D" id="3.30.230.10">
    <property type="match status" value="1"/>
</dbReference>
<dbReference type="HAMAP" id="MF_00227">
    <property type="entry name" value="RNase_P"/>
    <property type="match status" value="1"/>
</dbReference>
<dbReference type="InterPro" id="IPR020568">
    <property type="entry name" value="Ribosomal_Su5_D2-typ_SF"/>
</dbReference>
<dbReference type="InterPro" id="IPR014721">
    <property type="entry name" value="Ribsml_uS5_D2-typ_fold_subgr"/>
</dbReference>
<dbReference type="InterPro" id="IPR000100">
    <property type="entry name" value="RNase_P"/>
</dbReference>
<dbReference type="InterPro" id="IPR020539">
    <property type="entry name" value="RNase_P_CS"/>
</dbReference>
<dbReference type="NCBIfam" id="TIGR00188">
    <property type="entry name" value="rnpA"/>
    <property type="match status" value="1"/>
</dbReference>
<dbReference type="PANTHER" id="PTHR33992">
    <property type="entry name" value="RIBONUCLEASE P PROTEIN COMPONENT"/>
    <property type="match status" value="1"/>
</dbReference>
<dbReference type="PANTHER" id="PTHR33992:SF1">
    <property type="entry name" value="RIBONUCLEASE P PROTEIN COMPONENT"/>
    <property type="match status" value="1"/>
</dbReference>
<dbReference type="Pfam" id="PF00825">
    <property type="entry name" value="Ribonuclease_P"/>
    <property type="match status" value="1"/>
</dbReference>
<dbReference type="SUPFAM" id="SSF54211">
    <property type="entry name" value="Ribosomal protein S5 domain 2-like"/>
    <property type="match status" value="1"/>
</dbReference>
<dbReference type="PROSITE" id="PS00648">
    <property type="entry name" value="RIBONUCLEASE_P"/>
    <property type="match status" value="1"/>
</dbReference>
<accession>P0DF25</accession>
<accession>P66690</accession>
<accession>Q8P2P9</accession>
<name>RNPA_STRPQ</name>
<proteinExistence type="inferred from homology"/>
<evidence type="ECO:0000255" key="1">
    <source>
        <dbReference type="HAMAP-Rule" id="MF_00227"/>
    </source>
</evidence>
<gene>
    <name evidence="1" type="primary">rnpA</name>
    <name type="ordered locus">SPs0180</name>
</gene>
<keyword id="KW-0255">Endonuclease</keyword>
<keyword id="KW-0378">Hydrolase</keyword>
<keyword id="KW-0540">Nuclease</keyword>
<keyword id="KW-0694">RNA-binding</keyword>
<keyword id="KW-0819">tRNA processing</keyword>
<sequence length="119" mass="13866">MKKTYRVKREKDFQAIFKDGKSTANRKFVIYHLNRGQDHFRVGISVGKKIGNAVTRNAVKRKIRHVIMALGHQLKSEDFVVIARKGVESLEYQELQQNLHHVLKLAQLLEKGFESEEKH</sequence>
<comment type="function">
    <text evidence="1">RNaseP catalyzes the removal of the 5'-leader sequence from pre-tRNA to produce the mature 5'-terminus. It can also cleave other RNA substrates such as 4.5S RNA. The protein component plays an auxiliary but essential role in vivo by binding to the 5'-leader sequence and broadening the substrate specificity of the ribozyme.</text>
</comment>
<comment type="catalytic activity">
    <reaction evidence="1">
        <text>Endonucleolytic cleavage of RNA, removing 5'-extranucleotides from tRNA precursor.</text>
        <dbReference type="EC" id="3.1.26.5"/>
    </reaction>
</comment>
<comment type="subunit">
    <text evidence="1">Consists of a catalytic RNA component (M1 or rnpB) and a protein subunit.</text>
</comment>
<comment type="similarity">
    <text evidence="1">Belongs to the RnpA family.</text>
</comment>
<protein>
    <recommendedName>
        <fullName evidence="1">Ribonuclease P protein component</fullName>
        <shortName evidence="1">RNase P protein</shortName>
        <shortName evidence="1">RNaseP protein</shortName>
        <ecNumber evidence="1">3.1.26.5</ecNumber>
    </recommendedName>
    <alternativeName>
        <fullName evidence="1">Protein C5</fullName>
    </alternativeName>
</protein>